<sequence length="576" mass="65838">MDAFATSPTSALIKAVNCIAHVTPMAGEDSSENRRASNYKPSSWDYEFLQSLATSHNTAQEKHMKMAEKLKEEVKSMIKGQMEPVAKLELINIVQRLGLKYRFESEIKEELLSLYKDGTDAWWVDNLHATALRFRLLRENGIFVPQDVFETFKDKSGKFKSQLCKDVRGLLSLYEASYLGWEGEDLLDEAKKFSTTNLNNVKESISSNTLGRLVKHALNLPLHWSAARYEARWFIDEYEKEENVNPNLLKYAKFDFNIVQSIHQRELGNLARWWVETGLDKLSFVRNTLMQNFMWGCAMVFEPQYGKVRDAAVKQASLIAMVDDVYDVYGSLEELEIFTDIVDRWDITGIDKLPRNISMILLTMFNTANQIGYDLLRDRGFNGIPHIAQAWATLCKKYLKEAKWYHSGYKPTLEEYLENGLVSISFVLSLVTAYLQTETLENLTYESAAYVNSVPPLVRYSGLLNRLYNDLGTSSAEIARGDTLKSIQCYMTQTGATEEAAREHIKGLVHEAWKGMNKCLFEQTPFAEPFVGFNVNTVRGSQFFYQHGDGYAVTESWTKDLSLSVLIHPIPLNEED</sequence>
<name>MTPS2_SANAL</name>
<evidence type="ECO:0000250" key="1">
    <source>
        <dbReference type="UniProtKB" id="A0A1C9J6A7"/>
    </source>
</evidence>
<evidence type="ECO:0000250" key="2">
    <source>
        <dbReference type="UniProtKB" id="Q40577"/>
    </source>
</evidence>
<evidence type="ECO:0000269" key="3">
    <source>
    </source>
</evidence>
<evidence type="ECO:0000303" key="4">
    <source>
    </source>
</evidence>
<evidence type="ECO:0000303" key="5">
    <source>
    </source>
</evidence>
<evidence type="ECO:0000305" key="6"/>
<comment type="function">
    <text evidence="3">Monoterpene synthase which catalyzes the conversion of (2E)-geranyl diphosphate (GPP) to (R)-alpha-terpineol and (4S)-limonene, as well as small quantities of linalool, myrcene, (-)-alpha-pinene, (+)-sabinene and geraniol (PubMed:18541135). To a lower extent, catalyzes the conversion of (2E,6E)-farnesyl diphosphate (FPP) to beta-bisabolene (PubMed:18541135).</text>
</comment>
<comment type="catalytic activity">
    <reaction evidence="3">
        <text>(2E,6E)-farnesyl diphosphate = beta-bisabolene + diphosphate</text>
        <dbReference type="Rhea" id="RHEA:68528"/>
        <dbReference type="ChEBI" id="CHEBI:33019"/>
        <dbReference type="ChEBI" id="CHEBI:49249"/>
        <dbReference type="ChEBI" id="CHEBI:175763"/>
    </reaction>
    <physiologicalReaction direction="left-to-right" evidence="3">
        <dbReference type="Rhea" id="RHEA:68529"/>
    </physiologicalReaction>
</comment>
<comment type="catalytic activity">
    <reaction evidence="3">
        <text>(2E)-geranyl diphosphate + H2O = (R)-alpha-terpineol + diphosphate</text>
        <dbReference type="Rhea" id="RHEA:32555"/>
        <dbReference type="ChEBI" id="CHEBI:300"/>
        <dbReference type="ChEBI" id="CHEBI:15377"/>
        <dbReference type="ChEBI" id="CHEBI:33019"/>
        <dbReference type="ChEBI" id="CHEBI:58057"/>
        <dbReference type="EC" id="4.2.3.112"/>
    </reaction>
    <physiologicalReaction direction="left-to-right" evidence="3">
        <dbReference type="Rhea" id="RHEA:32556"/>
    </physiologicalReaction>
</comment>
<comment type="catalytic activity">
    <reaction evidence="3">
        <text>(2E)-geranyl diphosphate = (4S)-limonene + diphosphate</text>
        <dbReference type="Rhea" id="RHEA:12869"/>
        <dbReference type="ChEBI" id="CHEBI:15383"/>
        <dbReference type="ChEBI" id="CHEBI:33019"/>
        <dbReference type="ChEBI" id="CHEBI:58057"/>
        <dbReference type="EC" id="4.2.3.16"/>
    </reaction>
    <physiologicalReaction direction="left-to-right" evidence="3">
        <dbReference type="Rhea" id="RHEA:12870"/>
    </physiologicalReaction>
</comment>
<comment type="cofactor">
    <cofactor evidence="3">
        <name>Mg(2+)</name>
        <dbReference type="ChEBI" id="CHEBI:18420"/>
    </cofactor>
    <cofactor evidence="3">
        <name>Mn(2+)</name>
        <dbReference type="ChEBI" id="CHEBI:29035"/>
    </cofactor>
    <text evidence="1">Binds 3 Mg(2+) or Mn(2+) ions per subunit.</text>
</comment>
<comment type="pathway">
    <text evidence="3">Secondary metabolite biosynthesis; terpenoid biosynthesis.</text>
</comment>
<comment type="domain">
    <text evidence="6">The Asp-Asp-Xaa-Xaa-Asp/Glu (DDXXD/E) motif is important for the catalytic activity, presumably through binding to Mg(2+).</text>
</comment>
<comment type="similarity">
    <text evidence="6">Belongs to the terpene synthase family. Tpsb subfamily.</text>
</comment>
<organism>
    <name type="scientific">Santalum album</name>
    <name type="common">White sandalwood</name>
    <dbReference type="NCBI Taxonomy" id="35974"/>
    <lineage>
        <taxon>Eukaryota</taxon>
        <taxon>Viridiplantae</taxon>
        <taxon>Streptophyta</taxon>
        <taxon>Embryophyta</taxon>
        <taxon>Tracheophyta</taxon>
        <taxon>Spermatophyta</taxon>
        <taxon>Magnoliopsida</taxon>
        <taxon>eudicotyledons</taxon>
        <taxon>Gunneridae</taxon>
        <taxon>Pentapetalae</taxon>
        <taxon>Santalales</taxon>
        <taxon>Santalaceae</taxon>
        <taxon>Santalum</taxon>
    </lineage>
</organism>
<proteinExistence type="evidence at protein level"/>
<keyword id="KW-0456">Lyase</keyword>
<keyword id="KW-0460">Magnesium</keyword>
<keyword id="KW-0464">Manganese</keyword>
<keyword id="KW-0479">Metal-binding</keyword>
<feature type="chain" id="PRO_0000419323" description="(+)-alpha-terpineol synthase">
    <location>
        <begin position="1"/>
        <end position="576"/>
    </location>
</feature>
<feature type="short sequence motif" description="DDXXD motif" evidence="6">
    <location>
        <begin position="323"/>
        <end position="327"/>
    </location>
</feature>
<feature type="binding site" evidence="2">
    <location>
        <position position="286"/>
    </location>
    <ligand>
        <name>(2E)-geranyl diphosphate</name>
        <dbReference type="ChEBI" id="CHEBI:58057"/>
    </ligand>
</feature>
<feature type="binding site" evidence="2">
    <location>
        <position position="323"/>
    </location>
    <ligand>
        <name>(2E)-geranyl diphosphate</name>
        <dbReference type="ChEBI" id="CHEBI:58057"/>
    </ligand>
</feature>
<feature type="binding site" evidence="2">
    <location>
        <position position="323"/>
    </location>
    <ligand>
        <name>Mg(2+)</name>
        <dbReference type="ChEBI" id="CHEBI:18420"/>
        <label>1</label>
    </ligand>
</feature>
<feature type="binding site" evidence="2">
    <location>
        <position position="323"/>
    </location>
    <ligand>
        <name>Mg(2+)</name>
        <dbReference type="ChEBI" id="CHEBI:18420"/>
        <label>2</label>
    </ligand>
</feature>
<feature type="binding site" evidence="2">
    <location>
        <position position="327"/>
    </location>
    <ligand>
        <name>(2E)-geranyl diphosphate</name>
        <dbReference type="ChEBI" id="CHEBI:58057"/>
    </ligand>
</feature>
<feature type="binding site" evidence="2">
    <location>
        <position position="327"/>
    </location>
    <ligand>
        <name>Mg(2+)</name>
        <dbReference type="ChEBI" id="CHEBI:18420"/>
        <label>1</label>
    </ligand>
</feature>
<feature type="binding site" evidence="2">
    <location>
        <position position="327"/>
    </location>
    <ligand>
        <name>Mg(2+)</name>
        <dbReference type="ChEBI" id="CHEBI:18420"/>
        <label>2</label>
    </ligand>
</feature>
<feature type="binding site" evidence="2">
    <location>
        <position position="466"/>
    </location>
    <ligand>
        <name>(2E)-geranyl diphosphate</name>
        <dbReference type="ChEBI" id="CHEBI:58057"/>
    </ligand>
</feature>
<feature type="binding site" evidence="2">
    <location>
        <position position="469"/>
    </location>
    <ligand>
        <name>(2E)-geranyl diphosphate</name>
        <dbReference type="ChEBI" id="CHEBI:58057"/>
    </ligand>
</feature>
<feature type="binding site" evidence="2">
    <location>
        <position position="469"/>
    </location>
    <ligand>
        <name>Mg(2+)</name>
        <dbReference type="ChEBI" id="CHEBI:18420"/>
        <label>3</label>
    </ligand>
</feature>
<feature type="binding site" evidence="2">
    <location>
        <position position="473"/>
    </location>
    <ligand>
        <name>Mg(2+)</name>
        <dbReference type="ChEBI" id="CHEBI:18420"/>
        <label>3</label>
    </ligand>
</feature>
<feature type="binding site" evidence="2">
    <location>
        <position position="477"/>
    </location>
    <ligand>
        <name>Mg(2+)</name>
        <dbReference type="ChEBI" id="CHEBI:18420"/>
        <label>3</label>
    </ligand>
</feature>
<gene>
    <name evidence="5" type="primary">MonoTPS1</name>
</gene>
<dbReference type="EC" id="4.2.3.112" evidence="3"/>
<dbReference type="EC" id="4.2.3.16" evidence="3"/>
<dbReference type="EC" id="4.2.3.-" evidence="3"/>
<dbReference type="EMBL" id="JF746815">
    <property type="protein sequence ID" value="AEF32532.1"/>
    <property type="molecule type" value="Genomic_DNA"/>
</dbReference>
<dbReference type="SMR" id="F6M8I0"/>
<dbReference type="UniPathway" id="UPA00213"/>
<dbReference type="GO" id="GO:0050552">
    <property type="term" value="F:(4S)-limonene synthase activity"/>
    <property type="evidence" value="ECO:0000314"/>
    <property type="project" value="UniProtKB"/>
</dbReference>
<dbReference type="GO" id="GO:0000287">
    <property type="term" value="F:magnesium ion binding"/>
    <property type="evidence" value="ECO:0007669"/>
    <property type="project" value="InterPro"/>
</dbReference>
<dbReference type="GO" id="GO:0010333">
    <property type="term" value="F:terpene synthase activity"/>
    <property type="evidence" value="ECO:0000314"/>
    <property type="project" value="UniProtKB"/>
</dbReference>
<dbReference type="GO" id="GO:0016102">
    <property type="term" value="P:diterpenoid biosynthetic process"/>
    <property type="evidence" value="ECO:0007669"/>
    <property type="project" value="InterPro"/>
</dbReference>
<dbReference type="GO" id="GO:0016114">
    <property type="term" value="P:terpenoid biosynthetic process"/>
    <property type="evidence" value="ECO:0000314"/>
    <property type="project" value="UniProtKB"/>
</dbReference>
<dbReference type="CDD" id="cd00684">
    <property type="entry name" value="Terpene_cyclase_plant_C1"/>
    <property type="match status" value="1"/>
</dbReference>
<dbReference type="FunFam" id="1.10.600.10:FF:000007">
    <property type="entry name" value="Isoprene synthase, chloroplastic"/>
    <property type="match status" value="1"/>
</dbReference>
<dbReference type="FunFam" id="1.50.10.130:FF:000001">
    <property type="entry name" value="Isoprene synthase, chloroplastic"/>
    <property type="match status" value="1"/>
</dbReference>
<dbReference type="Gene3D" id="1.10.600.10">
    <property type="entry name" value="Farnesyl Diphosphate Synthase"/>
    <property type="match status" value="1"/>
</dbReference>
<dbReference type="Gene3D" id="1.50.10.130">
    <property type="entry name" value="Terpene synthase, N-terminal domain"/>
    <property type="match status" value="1"/>
</dbReference>
<dbReference type="InterPro" id="IPR008949">
    <property type="entry name" value="Isoprenoid_synthase_dom_sf"/>
</dbReference>
<dbReference type="InterPro" id="IPR034741">
    <property type="entry name" value="Terpene_cyclase-like_1_C"/>
</dbReference>
<dbReference type="InterPro" id="IPR044814">
    <property type="entry name" value="Terpene_cyclase_plant_C1"/>
</dbReference>
<dbReference type="InterPro" id="IPR001906">
    <property type="entry name" value="Terpene_synth_N"/>
</dbReference>
<dbReference type="InterPro" id="IPR036965">
    <property type="entry name" value="Terpene_synth_N_sf"/>
</dbReference>
<dbReference type="InterPro" id="IPR050148">
    <property type="entry name" value="Terpene_synthase-like"/>
</dbReference>
<dbReference type="InterPro" id="IPR005630">
    <property type="entry name" value="Terpene_synthase_metal-bd"/>
</dbReference>
<dbReference type="InterPro" id="IPR008930">
    <property type="entry name" value="Terpenoid_cyclase/PrenylTrfase"/>
</dbReference>
<dbReference type="PANTHER" id="PTHR31225:SF245">
    <property type="entry name" value="(-)-ALPHA-TERPINEOL SYNTHASE-LIKE"/>
    <property type="match status" value="1"/>
</dbReference>
<dbReference type="PANTHER" id="PTHR31225">
    <property type="entry name" value="OS04G0344100 PROTEIN-RELATED"/>
    <property type="match status" value="1"/>
</dbReference>
<dbReference type="Pfam" id="PF01397">
    <property type="entry name" value="Terpene_synth"/>
    <property type="match status" value="1"/>
</dbReference>
<dbReference type="Pfam" id="PF03936">
    <property type="entry name" value="Terpene_synth_C"/>
    <property type="match status" value="1"/>
</dbReference>
<dbReference type="SFLD" id="SFLDS00005">
    <property type="entry name" value="Isoprenoid_Synthase_Type_I"/>
    <property type="match status" value="1"/>
</dbReference>
<dbReference type="SFLD" id="SFLDG01019">
    <property type="entry name" value="Terpene_Cyclase_Like_1_C_Termi"/>
    <property type="match status" value="1"/>
</dbReference>
<dbReference type="SUPFAM" id="SSF48239">
    <property type="entry name" value="Terpenoid cyclases/Protein prenyltransferases"/>
    <property type="match status" value="1"/>
</dbReference>
<dbReference type="SUPFAM" id="SSF48576">
    <property type="entry name" value="Terpenoid synthases"/>
    <property type="match status" value="1"/>
</dbReference>
<protein>
    <recommendedName>
        <fullName>(+)-alpha-terpineol synthase</fullName>
        <ecNumber evidence="3">4.2.3.112</ecNumber>
    </recommendedName>
    <alternativeName>
        <fullName>(-)-limonene synthase</fullName>
        <ecNumber evidence="3">4.2.3.16</ecNumber>
    </alternativeName>
    <alternativeName>
        <fullName evidence="4">Beta-bisabolene synthase</fullName>
        <ecNumber evidence="3">4.2.3.-</ecNumber>
    </alternativeName>
    <alternativeName>
        <fullName evidence="5">Monoterpene synthase 1</fullName>
        <shortName evidence="4 5">SaMonoTPS1</shortName>
    </alternativeName>
</protein>
<reference key="1">
    <citation type="journal article" date="2011" name="J. Biol. Chem.">
        <title>Sandalwood fragrance biosynthesis involves sesquiterpene synthases of both the terpene synthase (TPS)-a and TPS-b Subfamilies, including santalene synthases.</title>
        <authorList>
            <person name="Jones C.G."/>
            <person name="Moniodis J."/>
            <person name="Zulak K.G."/>
            <person name="Scaffidi A."/>
            <person name="Plummer J.A."/>
            <person name="Ghisalberti E.L."/>
            <person name="Barbour E.L."/>
            <person name="Bohlmann J."/>
        </authorList>
    </citation>
    <scope>NUCLEOTIDE SEQUENCE [GENOMIC DNA]</scope>
</reference>
<reference key="2">
    <citation type="journal article" date="2008" name="Arch. Biochem. Biophys.">
        <title>Isolation of cDNAs and functional characterisation of two multi-product terpene synthase enzymes from sandalwood, Santalum album L.</title>
        <authorList>
            <person name="Jones C.G."/>
            <person name="Keeling C.I."/>
            <person name="Ghisalberti E.L."/>
            <person name="Barbour E.L."/>
            <person name="Plummer J.A."/>
            <person name="Bohlmann J."/>
        </authorList>
    </citation>
    <scope>FUNCTION</scope>
    <scope>CATALYTIC ACTIVITY</scope>
    <scope>PATHWAY</scope>
    <scope>COFACTOR</scope>
</reference>
<accession>F6M8I0</accession>